<dbReference type="EC" id="2.6.1.9" evidence="1"/>
<dbReference type="EMBL" id="CP000158">
    <property type="protein sequence ID" value="ABI77418.1"/>
    <property type="molecule type" value="Genomic_DNA"/>
</dbReference>
<dbReference type="RefSeq" id="WP_011646145.1">
    <property type="nucleotide sequence ID" value="NC_008358.1"/>
</dbReference>
<dbReference type="SMR" id="Q0C348"/>
<dbReference type="STRING" id="228405.HNE_1125"/>
<dbReference type="KEGG" id="hne:HNE_1125"/>
<dbReference type="eggNOG" id="COG0079">
    <property type="taxonomic scope" value="Bacteria"/>
</dbReference>
<dbReference type="HOGENOM" id="CLU_017584_3_3_5"/>
<dbReference type="UniPathway" id="UPA00031">
    <property type="reaction ID" value="UER00012"/>
</dbReference>
<dbReference type="Proteomes" id="UP000001959">
    <property type="component" value="Chromosome"/>
</dbReference>
<dbReference type="GO" id="GO:0004400">
    <property type="term" value="F:histidinol-phosphate transaminase activity"/>
    <property type="evidence" value="ECO:0007669"/>
    <property type="project" value="UniProtKB-UniRule"/>
</dbReference>
<dbReference type="GO" id="GO:0030170">
    <property type="term" value="F:pyridoxal phosphate binding"/>
    <property type="evidence" value="ECO:0007669"/>
    <property type="project" value="InterPro"/>
</dbReference>
<dbReference type="GO" id="GO:0000105">
    <property type="term" value="P:L-histidine biosynthetic process"/>
    <property type="evidence" value="ECO:0007669"/>
    <property type="project" value="UniProtKB-UniRule"/>
</dbReference>
<dbReference type="CDD" id="cd00609">
    <property type="entry name" value="AAT_like"/>
    <property type="match status" value="1"/>
</dbReference>
<dbReference type="Gene3D" id="3.90.1150.10">
    <property type="entry name" value="Aspartate Aminotransferase, domain 1"/>
    <property type="match status" value="1"/>
</dbReference>
<dbReference type="Gene3D" id="3.40.640.10">
    <property type="entry name" value="Type I PLP-dependent aspartate aminotransferase-like (Major domain)"/>
    <property type="match status" value="1"/>
</dbReference>
<dbReference type="HAMAP" id="MF_01023">
    <property type="entry name" value="HisC_aminotrans_2"/>
    <property type="match status" value="1"/>
</dbReference>
<dbReference type="InterPro" id="IPR004839">
    <property type="entry name" value="Aminotransferase_I/II_large"/>
</dbReference>
<dbReference type="InterPro" id="IPR005861">
    <property type="entry name" value="HisP_aminotrans"/>
</dbReference>
<dbReference type="InterPro" id="IPR050106">
    <property type="entry name" value="HistidinolP_aminotransfase"/>
</dbReference>
<dbReference type="InterPro" id="IPR015424">
    <property type="entry name" value="PyrdxlP-dep_Trfase"/>
</dbReference>
<dbReference type="InterPro" id="IPR015421">
    <property type="entry name" value="PyrdxlP-dep_Trfase_major"/>
</dbReference>
<dbReference type="InterPro" id="IPR015422">
    <property type="entry name" value="PyrdxlP-dep_Trfase_small"/>
</dbReference>
<dbReference type="NCBIfam" id="TIGR01141">
    <property type="entry name" value="hisC"/>
    <property type="match status" value="1"/>
</dbReference>
<dbReference type="PANTHER" id="PTHR43643:SF3">
    <property type="entry name" value="HISTIDINOL-PHOSPHATE AMINOTRANSFERASE"/>
    <property type="match status" value="1"/>
</dbReference>
<dbReference type="PANTHER" id="PTHR43643">
    <property type="entry name" value="HISTIDINOL-PHOSPHATE AMINOTRANSFERASE 2"/>
    <property type="match status" value="1"/>
</dbReference>
<dbReference type="Pfam" id="PF00155">
    <property type="entry name" value="Aminotran_1_2"/>
    <property type="match status" value="1"/>
</dbReference>
<dbReference type="SUPFAM" id="SSF53383">
    <property type="entry name" value="PLP-dependent transferases"/>
    <property type="match status" value="1"/>
</dbReference>
<proteinExistence type="inferred from homology"/>
<gene>
    <name evidence="1" type="primary">hisC</name>
    <name type="ordered locus">HNE_1125</name>
</gene>
<protein>
    <recommendedName>
        <fullName evidence="1">Histidinol-phosphate aminotransferase</fullName>
        <ecNumber evidence="1">2.6.1.9</ecNumber>
    </recommendedName>
    <alternativeName>
        <fullName evidence="1">Imidazole acetol-phosphate transaminase</fullName>
    </alternativeName>
</protein>
<name>HIS8_HYPNA</name>
<keyword id="KW-0028">Amino-acid biosynthesis</keyword>
<keyword id="KW-0032">Aminotransferase</keyword>
<keyword id="KW-0368">Histidine biosynthesis</keyword>
<keyword id="KW-0663">Pyridoxal phosphate</keyword>
<keyword id="KW-1185">Reference proteome</keyword>
<keyword id="KW-0808">Transferase</keyword>
<feature type="chain" id="PRO_0000319763" description="Histidinol-phosphate aminotransferase">
    <location>
        <begin position="1"/>
        <end position="367"/>
    </location>
</feature>
<feature type="modified residue" description="N6-(pyridoxal phosphate)lysine" evidence="1">
    <location>
        <position position="225"/>
    </location>
</feature>
<reference key="1">
    <citation type="journal article" date="2006" name="J. Bacteriol.">
        <title>Comparative genomic evidence for a close relationship between the dimorphic prosthecate bacteria Hyphomonas neptunium and Caulobacter crescentus.</title>
        <authorList>
            <person name="Badger J.H."/>
            <person name="Hoover T.R."/>
            <person name="Brun Y.V."/>
            <person name="Weiner R.M."/>
            <person name="Laub M.T."/>
            <person name="Alexandre G."/>
            <person name="Mrazek J."/>
            <person name="Ren Q."/>
            <person name="Paulsen I.T."/>
            <person name="Nelson K.E."/>
            <person name="Khouri H.M."/>
            <person name="Radune D."/>
            <person name="Sosa J."/>
            <person name="Dodson R.J."/>
            <person name="Sullivan S.A."/>
            <person name="Rosovitz M.J."/>
            <person name="Madupu R."/>
            <person name="Brinkac L.M."/>
            <person name="Durkin A.S."/>
            <person name="Daugherty S.C."/>
            <person name="Kothari S.P."/>
            <person name="Giglio M.G."/>
            <person name="Zhou L."/>
            <person name="Haft D.H."/>
            <person name="Selengut J.D."/>
            <person name="Davidsen T.M."/>
            <person name="Yang Q."/>
            <person name="Zafar N."/>
            <person name="Ward N.L."/>
        </authorList>
    </citation>
    <scope>NUCLEOTIDE SEQUENCE [LARGE SCALE GENOMIC DNA]</scope>
    <source>
        <strain>ATCC 15444</strain>
    </source>
</reference>
<comment type="catalytic activity">
    <reaction evidence="1">
        <text>L-histidinol phosphate + 2-oxoglutarate = 3-(imidazol-4-yl)-2-oxopropyl phosphate + L-glutamate</text>
        <dbReference type="Rhea" id="RHEA:23744"/>
        <dbReference type="ChEBI" id="CHEBI:16810"/>
        <dbReference type="ChEBI" id="CHEBI:29985"/>
        <dbReference type="ChEBI" id="CHEBI:57766"/>
        <dbReference type="ChEBI" id="CHEBI:57980"/>
        <dbReference type="EC" id="2.6.1.9"/>
    </reaction>
</comment>
<comment type="cofactor">
    <cofactor evidence="1">
        <name>pyridoxal 5'-phosphate</name>
        <dbReference type="ChEBI" id="CHEBI:597326"/>
    </cofactor>
</comment>
<comment type="pathway">
    <text evidence="1">Amino-acid biosynthesis; L-histidine biosynthesis; L-histidine from 5-phospho-alpha-D-ribose 1-diphosphate: step 7/9.</text>
</comment>
<comment type="subunit">
    <text evidence="1">Homodimer.</text>
</comment>
<comment type="similarity">
    <text evidence="1">Belongs to the class-II pyridoxal-phosphate-dependent aminotransferase family. Histidinol-phosphate aminotransferase subfamily.</text>
</comment>
<sequence>MSKPISQIEPLPHIAATKPYVPGGKLHGAKGAVAMLASNENPFGPSPKAVEAAKAAAANVHVYPDPDYGPLRAAIAAAKGIADASRVVTSAGSDEIIHLLTQCYAGPGDEVLFTEHAFSMYRVSAGAHGATSVTVPETDMTAGVNAILGAVSPRTKILFLANPNNPTGTMLSVDELKALQDALPPHVLFVVDGAYSEYLGPDYEAQLRDLVDRRDNTVMMRTFSKIYGLAAMRLGWAYMPAGIAAIYQRIRGPFNVSSIAAAAGIACVGDEAFLKMSRDHNTHWRAIMTDALNAMGLPTPPSHANFIVTEFGSDERAAAANQHLKDNDILVRAIGGYGLPTKLRISVGSADDNQRFLDALKAFTASR</sequence>
<evidence type="ECO:0000255" key="1">
    <source>
        <dbReference type="HAMAP-Rule" id="MF_01023"/>
    </source>
</evidence>
<accession>Q0C348</accession>
<organism>
    <name type="scientific">Hyphomonas neptunium (strain ATCC 15444)</name>
    <dbReference type="NCBI Taxonomy" id="228405"/>
    <lineage>
        <taxon>Bacteria</taxon>
        <taxon>Pseudomonadati</taxon>
        <taxon>Pseudomonadota</taxon>
        <taxon>Alphaproteobacteria</taxon>
        <taxon>Hyphomonadales</taxon>
        <taxon>Hyphomonadaceae</taxon>
        <taxon>Hyphomonas</taxon>
    </lineage>
</organism>